<dbReference type="EMBL" id="LT708304">
    <property type="protein sequence ID" value="SIT99982.1"/>
    <property type="status" value="ALT_INIT"/>
    <property type="molecule type" value="Genomic_DNA"/>
</dbReference>
<dbReference type="RefSeq" id="NP_855033.1">
    <property type="nucleotide sequence ID" value="NC_002945.3"/>
</dbReference>
<dbReference type="RefSeq" id="WP_003911484.1">
    <property type="nucleotide sequence ID" value="NC_002945.4"/>
</dbReference>
<dbReference type="SMR" id="P63453"/>
<dbReference type="KEGG" id="mbo:BQ2027_MB1379"/>
<dbReference type="PATRIC" id="fig|233413.5.peg.1511"/>
<dbReference type="UniPathway" id="UPA00011"/>
<dbReference type="Proteomes" id="UP000001419">
    <property type="component" value="Chromosome"/>
</dbReference>
<dbReference type="GO" id="GO:0005737">
    <property type="term" value="C:cytoplasm"/>
    <property type="evidence" value="ECO:0007669"/>
    <property type="project" value="UniProtKB-SubCell"/>
</dbReference>
<dbReference type="Gene3D" id="1.10.1200.10">
    <property type="entry name" value="ACP-like"/>
    <property type="match status" value="1"/>
</dbReference>
<dbReference type="InterPro" id="IPR036736">
    <property type="entry name" value="ACP-like_sf"/>
</dbReference>
<dbReference type="InterPro" id="IPR009081">
    <property type="entry name" value="PP-bd_ACP"/>
</dbReference>
<dbReference type="NCBIfam" id="NF004533">
    <property type="entry name" value="PRK05883.1"/>
    <property type="match status" value="1"/>
</dbReference>
<dbReference type="Pfam" id="PF00550">
    <property type="entry name" value="PP-binding"/>
    <property type="match status" value="1"/>
</dbReference>
<dbReference type="SUPFAM" id="SSF47336">
    <property type="entry name" value="ACP-like"/>
    <property type="match status" value="1"/>
</dbReference>
<dbReference type="PROSITE" id="PS50075">
    <property type="entry name" value="CARRIER"/>
    <property type="match status" value="1"/>
</dbReference>
<gene>
    <name type="primary">mbtL</name>
    <name type="ordered locus">BQ2027_MB1379</name>
</gene>
<accession>P63453</accession>
<accession>A0A1R3XY30</accession>
<accession>Q11014</accession>
<accession>X2BHN6</accession>
<protein>
    <recommendedName>
        <fullName>Acyl carrier protein MbtL</fullName>
        <shortName>ACP</shortName>
    </recommendedName>
    <alternativeName>
        <fullName>Mycobactin synthase protein L</fullName>
    </alternativeName>
</protein>
<keyword id="KW-0963">Cytoplasm</keyword>
<keyword id="KW-0596">Phosphopantetheine</keyword>
<keyword id="KW-0597">Phosphoprotein</keyword>
<keyword id="KW-1185">Reference proteome</keyword>
<proteinExistence type="inferred from homology"/>
<organism>
    <name type="scientific">Mycobacterium bovis (strain ATCC BAA-935 / AF2122/97)</name>
    <dbReference type="NCBI Taxonomy" id="233413"/>
    <lineage>
        <taxon>Bacteria</taxon>
        <taxon>Bacillati</taxon>
        <taxon>Actinomycetota</taxon>
        <taxon>Actinomycetes</taxon>
        <taxon>Mycobacteriales</taxon>
        <taxon>Mycobacteriaceae</taxon>
        <taxon>Mycobacterium</taxon>
        <taxon>Mycobacterium tuberculosis complex</taxon>
    </lineage>
</organism>
<evidence type="ECO:0000250" key="1"/>
<evidence type="ECO:0000255" key="2">
    <source>
        <dbReference type="PROSITE-ProRule" id="PRU00258"/>
    </source>
</evidence>
<evidence type="ECO:0000305" key="3"/>
<feature type="chain" id="PRO_0000180270" description="Acyl carrier protein MbtL">
    <location>
        <begin position="1"/>
        <end position="84"/>
    </location>
</feature>
<feature type="domain" description="Carrier" evidence="2">
    <location>
        <begin position="6"/>
        <end position="81"/>
    </location>
</feature>
<feature type="modified residue" description="O-(pantetheine 4'-phosphoryl)serine" evidence="2">
    <location>
        <position position="41"/>
    </location>
</feature>
<reference key="1">
    <citation type="journal article" date="2003" name="Proc. Natl. Acad. Sci. U.S.A.">
        <title>The complete genome sequence of Mycobacterium bovis.</title>
        <authorList>
            <person name="Garnier T."/>
            <person name="Eiglmeier K."/>
            <person name="Camus J.-C."/>
            <person name="Medina N."/>
            <person name="Mansoor H."/>
            <person name="Pryor M."/>
            <person name="Duthoy S."/>
            <person name="Grondin S."/>
            <person name="Lacroix C."/>
            <person name="Monsempe C."/>
            <person name="Simon S."/>
            <person name="Harris B."/>
            <person name="Atkin R."/>
            <person name="Doggett J."/>
            <person name="Mayes R."/>
            <person name="Keating L."/>
            <person name="Wheeler P.R."/>
            <person name="Parkhill J."/>
            <person name="Barrell B.G."/>
            <person name="Cole S.T."/>
            <person name="Gordon S.V."/>
            <person name="Hewinson R.G."/>
        </authorList>
    </citation>
    <scope>NUCLEOTIDE SEQUENCE [LARGE SCALE GENOMIC DNA]</scope>
    <source>
        <strain>ATCC BAA-935 / AF2122/97</strain>
    </source>
</reference>
<reference key="2">
    <citation type="journal article" date="2017" name="Genome Announc.">
        <title>Updated reference genome sequence and annotation of Mycobacterium bovis AF2122/97.</title>
        <authorList>
            <person name="Malone K.M."/>
            <person name="Farrell D."/>
            <person name="Stuber T.P."/>
            <person name="Schubert O.T."/>
            <person name="Aebersold R."/>
            <person name="Robbe-Austerman S."/>
            <person name="Gordon S.V."/>
        </authorList>
    </citation>
    <scope>NUCLEOTIDE SEQUENCE [LARGE SCALE GENOMIC DNA]</scope>
    <scope>GENOME REANNOTATION</scope>
    <source>
        <strain>ATCC BAA-935 / AF2122/97</strain>
    </source>
</reference>
<comment type="function">
    <text evidence="1">Acyl carrier protein involved in the formation of acyl-S-ACP intermediates within the mycobactin biosynthesis process. The aliphatic chains carried by ACP are subsequently transferred on to the mycobactin core by MbtK (By similarity).</text>
</comment>
<comment type="pathway">
    <text>Siderophore biosynthesis; mycobactin biosynthesis.</text>
</comment>
<comment type="subcellular location">
    <subcellularLocation>
        <location evidence="1">Cytoplasm</location>
    </subcellularLocation>
</comment>
<comment type="PTM">
    <text evidence="1">4'-phosphopantetheine is transferred from CoA to a specific serine of apo-ACP, leading to the activated holo-ACP form.</text>
</comment>
<comment type="sequence caution" evidence="3">
    <conflict type="erroneous initiation">
        <sequence resource="EMBL-CDS" id="SIT99982"/>
    </conflict>
    <text>Extended N-terminus.</text>
</comment>
<sequence>MTSSPSTVSTTLLSILRDDLNIDLTRVTPDARLVDDVGLDSVAFAVGMVAIEERLGVALSEEELLTCDTVGELEAAIAAKYRDE</sequence>
<name>MBTL_MYCBO</name>